<organism>
    <name type="scientific">Ligilactobacillus salivarius (strain UCC118)</name>
    <name type="common">Lactobacillus salivarius</name>
    <dbReference type="NCBI Taxonomy" id="362948"/>
    <lineage>
        <taxon>Bacteria</taxon>
        <taxon>Bacillati</taxon>
        <taxon>Bacillota</taxon>
        <taxon>Bacilli</taxon>
        <taxon>Lactobacillales</taxon>
        <taxon>Lactobacillaceae</taxon>
        <taxon>Ligilactobacillus</taxon>
    </lineage>
</organism>
<name>EFG_LIGS1</name>
<protein>
    <recommendedName>
        <fullName evidence="1">Elongation factor G</fullName>
        <shortName evidence="1">EF-G</shortName>
    </recommendedName>
</protein>
<dbReference type="EMBL" id="CP000233">
    <property type="protein sequence ID" value="ABD99017.1"/>
    <property type="molecule type" value="Genomic_DNA"/>
</dbReference>
<dbReference type="RefSeq" id="WP_011475578.1">
    <property type="nucleotide sequence ID" value="NC_007929.1"/>
</dbReference>
<dbReference type="RefSeq" id="YP_535100.1">
    <property type="nucleotide sequence ID" value="NC_007929.1"/>
</dbReference>
<dbReference type="SMR" id="Q1WVA0"/>
<dbReference type="STRING" id="362948.LSL_0202"/>
<dbReference type="GeneID" id="89464947"/>
<dbReference type="KEGG" id="lsl:LSL_0202"/>
<dbReference type="PATRIC" id="fig|362948.14.peg.279"/>
<dbReference type="HOGENOM" id="CLU_002794_4_1_9"/>
<dbReference type="OrthoDB" id="9804431at2"/>
<dbReference type="Proteomes" id="UP000006559">
    <property type="component" value="Chromosome"/>
</dbReference>
<dbReference type="GO" id="GO:0005737">
    <property type="term" value="C:cytoplasm"/>
    <property type="evidence" value="ECO:0007669"/>
    <property type="project" value="UniProtKB-SubCell"/>
</dbReference>
<dbReference type="GO" id="GO:0005525">
    <property type="term" value="F:GTP binding"/>
    <property type="evidence" value="ECO:0007669"/>
    <property type="project" value="UniProtKB-UniRule"/>
</dbReference>
<dbReference type="GO" id="GO:0003924">
    <property type="term" value="F:GTPase activity"/>
    <property type="evidence" value="ECO:0007669"/>
    <property type="project" value="InterPro"/>
</dbReference>
<dbReference type="GO" id="GO:0003746">
    <property type="term" value="F:translation elongation factor activity"/>
    <property type="evidence" value="ECO:0007669"/>
    <property type="project" value="UniProtKB-UniRule"/>
</dbReference>
<dbReference type="GO" id="GO:0032790">
    <property type="term" value="P:ribosome disassembly"/>
    <property type="evidence" value="ECO:0007669"/>
    <property type="project" value="TreeGrafter"/>
</dbReference>
<dbReference type="CDD" id="cd01886">
    <property type="entry name" value="EF-G"/>
    <property type="match status" value="1"/>
</dbReference>
<dbReference type="CDD" id="cd16262">
    <property type="entry name" value="EFG_III"/>
    <property type="match status" value="1"/>
</dbReference>
<dbReference type="CDD" id="cd01434">
    <property type="entry name" value="EFG_mtEFG1_IV"/>
    <property type="match status" value="1"/>
</dbReference>
<dbReference type="CDD" id="cd03713">
    <property type="entry name" value="EFG_mtEFG_C"/>
    <property type="match status" value="1"/>
</dbReference>
<dbReference type="CDD" id="cd04088">
    <property type="entry name" value="EFG_mtEFG_II"/>
    <property type="match status" value="1"/>
</dbReference>
<dbReference type="FunFam" id="2.40.30.10:FF:000006">
    <property type="entry name" value="Elongation factor G"/>
    <property type="match status" value="1"/>
</dbReference>
<dbReference type="FunFam" id="3.30.230.10:FF:000003">
    <property type="entry name" value="Elongation factor G"/>
    <property type="match status" value="1"/>
</dbReference>
<dbReference type="FunFam" id="3.30.70.240:FF:000001">
    <property type="entry name" value="Elongation factor G"/>
    <property type="match status" value="1"/>
</dbReference>
<dbReference type="FunFam" id="3.30.70.870:FF:000001">
    <property type="entry name" value="Elongation factor G"/>
    <property type="match status" value="1"/>
</dbReference>
<dbReference type="FunFam" id="3.40.50.300:FF:000029">
    <property type="entry name" value="Elongation factor G"/>
    <property type="match status" value="1"/>
</dbReference>
<dbReference type="Gene3D" id="3.30.230.10">
    <property type="match status" value="1"/>
</dbReference>
<dbReference type="Gene3D" id="3.30.70.240">
    <property type="match status" value="1"/>
</dbReference>
<dbReference type="Gene3D" id="3.30.70.870">
    <property type="entry name" value="Elongation Factor G (Translational Gtpase), domain 3"/>
    <property type="match status" value="1"/>
</dbReference>
<dbReference type="Gene3D" id="3.40.50.300">
    <property type="entry name" value="P-loop containing nucleotide triphosphate hydrolases"/>
    <property type="match status" value="1"/>
</dbReference>
<dbReference type="Gene3D" id="2.40.30.10">
    <property type="entry name" value="Translation factors"/>
    <property type="match status" value="1"/>
</dbReference>
<dbReference type="HAMAP" id="MF_00054_B">
    <property type="entry name" value="EF_G_EF_2_B"/>
    <property type="match status" value="1"/>
</dbReference>
<dbReference type="InterPro" id="IPR053905">
    <property type="entry name" value="EF-G-like_DII"/>
</dbReference>
<dbReference type="InterPro" id="IPR041095">
    <property type="entry name" value="EFG_II"/>
</dbReference>
<dbReference type="InterPro" id="IPR009022">
    <property type="entry name" value="EFG_III"/>
</dbReference>
<dbReference type="InterPro" id="IPR035647">
    <property type="entry name" value="EFG_III/V"/>
</dbReference>
<dbReference type="InterPro" id="IPR047872">
    <property type="entry name" value="EFG_IV"/>
</dbReference>
<dbReference type="InterPro" id="IPR035649">
    <property type="entry name" value="EFG_V"/>
</dbReference>
<dbReference type="InterPro" id="IPR000640">
    <property type="entry name" value="EFG_V-like"/>
</dbReference>
<dbReference type="InterPro" id="IPR031157">
    <property type="entry name" value="G_TR_CS"/>
</dbReference>
<dbReference type="InterPro" id="IPR027417">
    <property type="entry name" value="P-loop_NTPase"/>
</dbReference>
<dbReference type="InterPro" id="IPR020568">
    <property type="entry name" value="Ribosomal_Su5_D2-typ_SF"/>
</dbReference>
<dbReference type="InterPro" id="IPR014721">
    <property type="entry name" value="Ribsml_uS5_D2-typ_fold_subgr"/>
</dbReference>
<dbReference type="InterPro" id="IPR005225">
    <property type="entry name" value="Small_GTP-bd"/>
</dbReference>
<dbReference type="InterPro" id="IPR000795">
    <property type="entry name" value="T_Tr_GTP-bd_dom"/>
</dbReference>
<dbReference type="InterPro" id="IPR009000">
    <property type="entry name" value="Transl_B-barrel_sf"/>
</dbReference>
<dbReference type="InterPro" id="IPR004540">
    <property type="entry name" value="Transl_elong_EFG/EF2"/>
</dbReference>
<dbReference type="InterPro" id="IPR005517">
    <property type="entry name" value="Transl_elong_EFG/EF2_IV"/>
</dbReference>
<dbReference type="NCBIfam" id="TIGR00484">
    <property type="entry name" value="EF-G"/>
    <property type="match status" value="1"/>
</dbReference>
<dbReference type="NCBIfam" id="NF009379">
    <property type="entry name" value="PRK12740.1-3"/>
    <property type="match status" value="1"/>
</dbReference>
<dbReference type="NCBIfam" id="NF009381">
    <property type="entry name" value="PRK12740.1-5"/>
    <property type="match status" value="1"/>
</dbReference>
<dbReference type="NCBIfam" id="TIGR00231">
    <property type="entry name" value="small_GTP"/>
    <property type="match status" value="1"/>
</dbReference>
<dbReference type="PANTHER" id="PTHR43261:SF1">
    <property type="entry name" value="RIBOSOME-RELEASING FACTOR 2, MITOCHONDRIAL"/>
    <property type="match status" value="1"/>
</dbReference>
<dbReference type="PANTHER" id="PTHR43261">
    <property type="entry name" value="TRANSLATION ELONGATION FACTOR G-RELATED"/>
    <property type="match status" value="1"/>
</dbReference>
<dbReference type="Pfam" id="PF22042">
    <property type="entry name" value="EF-G_D2"/>
    <property type="match status" value="1"/>
</dbReference>
<dbReference type="Pfam" id="PF00679">
    <property type="entry name" value="EFG_C"/>
    <property type="match status" value="1"/>
</dbReference>
<dbReference type="Pfam" id="PF14492">
    <property type="entry name" value="EFG_III"/>
    <property type="match status" value="1"/>
</dbReference>
<dbReference type="Pfam" id="PF03764">
    <property type="entry name" value="EFG_IV"/>
    <property type="match status" value="1"/>
</dbReference>
<dbReference type="Pfam" id="PF00009">
    <property type="entry name" value="GTP_EFTU"/>
    <property type="match status" value="1"/>
</dbReference>
<dbReference type="PRINTS" id="PR00315">
    <property type="entry name" value="ELONGATNFCT"/>
</dbReference>
<dbReference type="SMART" id="SM00838">
    <property type="entry name" value="EFG_C"/>
    <property type="match status" value="1"/>
</dbReference>
<dbReference type="SMART" id="SM00889">
    <property type="entry name" value="EFG_IV"/>
    <property type="match status" value="1"/>
</dbReference>
<dbReference type="SUPFAM" id="SSF54980">
    <property type="entry name" value="EF-G C-terminal domain-like"/>
    <property type="match status" value="2"/>
</dbReference>
<dbReference type="SUPFAM" id="SSF52540">
    <property type="entry name" value="P-loop containing nucleoside triphosphate hydrolases"/>
    <property type="match status" value="1"/>
</dbReference>
<dbReference type="SUPFAM" id="SSF54211">
    <property type="entry name" value="Ribosomal protein S5 domain 2-like"/>
    <property type="match status" value="1"/>
</dbReference>
<dbReference type="SUPFAM" id="SSF50447">
    <property type="entry name" value="Translation proteins"/>
    <property type="match status" value="1"/>
</dbReference>
<dbReference type="PROSITE" id="PS00301">
    <property type="entry name" value="G_TR_1"/>
    <property type="match status" value="1"/>
</dbReference>
<dbReference type="PROSITE" id="PS51722">
    <property type="entry name" value="G_TR_2"/>
    <property type="match status" value="1"/>
</dbReference>
<accession>Q1WVA0</accession>
<proteinExistence type="inferred from homology"/>
<evidence type="ECO:0000255" key="1">
    <source>
        <dbReference type="HAMAP-Rule" id="MF_00054"/>
    </source>
</evidence>
<keyword id="KW-0963">Cytoplasm</keyword>
<keyword id="KW-0251">Elongation factor</keyword>
<keyword id="KW-0342">GTP-binding</keyword>
<keyword id="KW-0547">Nucleotide-binding</keyword>
<keyword id="KW-0648">Protein biosynthesis</keyword>
<keyword id="KW-1185">Reference proteome</keyword>
<reference key="1">
    <citation type="journal article" date="2006" name="Proc. Natl. Acad. Sci. U.S.A.">
        <title>Multireplicon genome architecture of Lactobacillus salivarius.</title>
        <authorList>
            <person name="Claesson M.J."/>
            <person name="Li Y."/>
            <person name="Leahy S."/>
            <person name="Canchaya C."/>
            <person name="van Pijkeren J.P."/>
            <person name="Cerdeno-Tarraga A.M."/>
            <person name="Parkhill J."/>
            <person name="Flynn S."/>
            <person name="O'Sullivan G.C."/>
            <person name="Collins J.K."/>
            <person name="Higgins D."/>
            <person name="Shanahan F."/>
            <person name="Fitzgerald G.F."/>
            <person name="van Sinderen D."/>
            <person name="O'Toole P.W."/>
        </authorList>
    </citation>
    <scope>NUCLEOTIDE SEQUENCE [LARGE SCALE GENOMIC DNA]</scope>
    <source>
        <strain>UCC118</strain>
    </source>
</reference>
<sequence length="697" mass="76861">MANKREFPLEKTRNIGIVAHIDAGKTTTTERILYYTGKIHKIGETHDGASQMDWMEQEQERGITITSAATTAQWKENRINIIDTPGHVDFTVEVERSLRVLDGAVVVLDAQSGVEPQTENVWRQATTYGVPRIVFVNKMDKIGANFDYSVSTIKDRLQANPLPVQMPIGAEDSFEGVIDLIEMKADLYDEDELGSKWDTVDVPDEYKEDAQARRDEMIEALADVNEDIMDKYLEGEEISNDEIRAAIRQATLNLDVFPVFAGSAFKNKGVQMMLDGVNDYLPSPLDVKPYKATDPETGEEIELKADDSAPFAGLAFKIATDPFVGRLTFFRVYRGTLEAGSYVLNATKGKRERVGRLLQMHSNHRNEIPEVFSGDIAAAIGLKNTTTGDSLTDPKTPLILESMEFPDPVIQVSVEPKSKADQDKMDVALQKLAEEDPTFKAETNPETGETLIAGMGELHLDIIVDRMKREFNVEATVGEPQVAYRETFTKQVSAQGKFVRQSGGKGQYGDVWIEFTPNEEGKGFEFEDAIVGGVVPREYIPSVEQGLKEAMQNGVLAGYPLIDVKAKLYDGSYHDVDSSEAAFKVAASLALRNAAPKGGAVILEPIMKVEIIAPEDNLGDVMGHVTARRGRVEGMEARGNAQVVNAFVPLAEMFGYATVLRSATQGRGTFTMTMDHYEPVPKSIQDEIIKKNGGNAE</sequence>
<gene>
    <name evidence="1" type="primary">fusA</name>
    <name type="ordered locus">LSL_0202</name>
</gene>
<feature type="chain" id="PRO_0000263464" description="Elongation factor G">
    <location>
        <begin position="1"/>
        <end position="697"/>
    </location>
</feature>
<feature type="domain" description="tr-type G">
    <location>
        <begin position="10"/>
        <end position="285"/>
    </location>
</feature>
<feature type="binding site" evidence="1">
    <location>
        <begin position="19"/>
        <end position="26"/>
    </location>
    <ligand>
        <name>GTP</name>
        <dbReference type="ChEBI" id="CHEBI:37565"/>
    </ligand>
</feature>
<feature type="binding site" evidence="1">
    <location>
        <begin position="83"/>
        <end position="87"/>
    </location>
    <ligand>
        <name>GTP</name>
        <dbReference type="ChEBI" id="CHEBI:37565"/>
    </ligand>
</feature>
<feature type="binding site" evidence="1">
    <location>
        <begin position="137"/>
        <end position="140"/>
    </location>
    <ligand>
        <name>GTP</name>
        <dbReference type="ChEBI" id="CHEBI:37565"/>
    </ligand>
</feature>
<comment type="function">
    <text evidence="1">Catalyzes the GTP-dependent ribosomal translocation step during translation elongation. During this step, the ribosome changes from the pre-translocational (PRE) to the post-translocational (POST) state as the newly formed A-site-bound peptidyl-tRNA and P-site-bound deacylated tRNA move to the P and E sites, respectively. Catalyzes the coordinated movement of the two tRNA molecules, the mRNA and conformational changes in the ribosome.</text>
</comment>
<comment type="subcellular location">
    <subcellularLocation>
        <location evidence="1">Cytoplasm</location>
    </subcellularLocation>
</comment>
<comment type="similarity">
    <text evidence="1">Belongs to the TRAFAC class translation factor GTPase superfamily. Classic translation factor GTPase family. EF-G/EF-2 subfamily.</text>
</comment>